<feature type="chain" id="PRO_0000342771" description="Putative pentatricopeptide repeat-containing protein At1g10330">
    <location>
        <begin position="1"/>
        <end position="467"/>
    </location>
</feature>
<feature type="repeat" description="PPR 1">
    <location>
        <begin position="50"/>
        <end position="84"/>
    </location>
</feature>
<feature type="repeat" description="PPR 2">
    <location>
        <begin position="85"/>
        <end position="119"/>
    </location>
</feature>
<feature type="repeat" description="PPR 3">
    <location>
        <begin position="120"/>
        <end position="150"/>
    </location>
</feature>
<feature type="repeat" description="PPR 4">
    <location>
        <begin position="151"/>
        <end position="181"/>
    </location>
</feature>
<feature type="repeat" description="PPR 5">
    <location>
        <begin position="182"/>
        <end position="216"/>
    </location>
</feature>
<feature type="repeat" description="PPR 6">
    <location>
        <begin position="220"/>
        <end position="256"/>
    </location>
</feature>
<feature type="repeat" description="PPR 7">
    <location>
        <begin position="257"/>
        <end position="287"/>
    </location>
</feature>
<feature type="repeat" description="PPR 8">
    <location>
        <begin position="288"/>
        <end position="322"/>
    </location>
</feature>
<feature type="repeat" description="PPR 9">
    <location>
        <begin position="323"/>
        <end position="358"/>
    </location>
</feature>
<feature type="repeat" description="PPR 10">
    <location>
        <begin position="359"/>
        <end position="389"/>
    </location>
</feature>
<feature type="region of interest" description="Type E motif; degenerate">
    <location>
        <begin position="394"/>
        <end position="467"/>
    </location>
</feature>
<name>PPR30_ARATH</name>
<accession>Q9SY75</accession>
<keyword id="KW-1185">Reference proteome</keyword>
<keyword id="KW-0677">Repeat</keyword>
<reference key="1">
    <citation type="journal article" date="2000" name="Nature">
        <title>Sequence and analysis of chromosome 1 of the plant Arabidopsis thaliana.</title>
        <authorList>
            <person name="Theologis A."/>
            <person name="Ecker J.R."/>
            <person name="Palm C.J."/>
            <person name="Federspiel N.A."/>
            <person name="Kaul S."/>
            <person name="White O."/>
            <person name="Alonso J."/>
            <person name="Altafi H."/>
            <person name="Araujo R."/>
            <person name="Bowman C.L."/>
            <person name="Brooks S.Y."/>
            <person name="Buehler E."/>
            <person name="Chan A."/>
            <person name="Chao Q."/>
            <person name="Chen H."/>
            <person name="Cheuk R.F."/>
            <person name="Chin C.W."/>
            <person name="Chung M.K."/>
            <person name="Conn L."/>
            <person name="Conway A.B."/>
            <person name="Conway A.R."/>
            <person name="Creasy T.H."/>
            <person name="Dewar K."/>
            <person name="Dunn P."/>
            <person name="Etgu P."/>
            <person name="Feldblyum T.V."/>
            <person name="Feng J.-D."/>
            <person name="Fong B."/>
            <person name="Fujii C.Y."/>
            <person name="Gill J.E."/>
            <person name="Goldsmith A.D."/>
            <person name="Haas B."/>
            <person name="Hansen N.F."/>
            <person name="Hughes B."/>
            <person name="Huizar L."/>
            <person name="Hunter J.L."/>
            <person name="Jenkins J."/>
            <person name="Johnson-Hopson C."/>
            <person name="Khan S."/>
            <person name="Khaykin E."/>
            <person name="Kim C.J."/>
            <person name="Koo H.L."/>
            <person name="Kremenetskaia I."/>
            <person name="Kurtz D.B."/>
            <person name="Kwan A."/>
            <person name="Lam B."/>
            <person name="Langin-Hooper S."/>
            <person name="Lee A."/>
            <person name="Lee J.M."/>
            <person name="Lenz C.A."/>
            <person name="Li J.H."/>
            <person name="Li Y.-P."/>
            <person name="Lin X."/>
            <person name="Liu S.X."/>
            <person name="Liu Z.A."/>
            <person name="Luros J.S."/>
            <person name="Maiti R."/>
            <person name="Marziali A."/>
            <person name="Militscher J."/>
            <person name="Miranda M."/>
            <person name="Nguyen M."/>
            <person name="Nierman W.C."/>
            <person name="Osborne B.I."/>
            <person name="Pai G."/>
            <person name="Peterson J."/>
            <person name="Pham P.K."/>
            <person name="Rizzo M."/>
            <person name="Rooney T."/>
            <person name="Rowley D."/>
            <person name="Sakano H."/>
            <person name="Salzberg S.L."/>
            <person name="Schwartz J.R."/>
            <person name="Shinn P."/>
            <person name="Southwick A.M."/>
            <person name="Sun H."/>
            <person name="Tallon L.J."/>
            <person name="Tambunga G."/>
            <person name="Toriumi M.J."/>
            <person name="Town C.D."/>
            <person name="Utterback T."/>
            <person name="Van Aken S."/>
            <person name="Vaysberg M."/>
            <person name="Vysotskaia V.S."/>
            <person name="Walker M."/>
            <person name="Wu D."/>
            <person name="Yu G."/>
            <person name="Fraser C.M."/>
            <person name="Venter J.C."/>
            <person name="Davis R.W."/>
        </authorList>
    </citation>
    <scope>NUCLEOTIDE SEQUENCE [LARGE SCALE GENOMIC DNA]</scope>
    <source>
        <strain>cv. Columbia</strain>
    </source>
</reference>
<reference key="2">
    <citation type="journal article" date="2017" name="Plant J.">
        <title>Araport11: a complete reannotation of the Arabidopsis thaliana reference genome.</title>
        <authorList>
            <person name="Cheng C.Y."/>
            <person name="Krishnakumar V."/>
            <person name="Chan A.P."/>
            <person name="Thibaud-Nissen F."/>
            <person name="Schobel S."/>
            <person name="Town C.D."/>
        </authorList>
    </citation>
    <scope>GENOME REANNOTATION</scope>
    <source>
        <strain>cv. Columbia</strain>
    </source>
</reference>
<reference key="3">
    <citation type="journal article" date="2004" name="Plant Cell">
        <title>Genome-wide analysis of Arabidopsis pentatricopeptide repeat proteins reveals their essential role in organelle biogenesis.</title>
        <authorList>
            <person name="Lurin C."/>
            <person name="Andres C."/>
            <person name="Aubourg S."/>
            <person name="Bellaoui M."/>
            <person name="Bitton F."/>
            <person name="Bruyere C."/>
            <person name="Caboche M."/>
            <person name="Debast C."/>
            <person name="Gualberto J."/>
            <person name="Hoffmann B."/>
            <person name="Lecharny A."/>
            <person name="Le Ret M."/>
            <person name="Martin-Magniette M.-L."/>
            <person name="Mireau H."/>
            <person name="Peeters N."/>
            <person name="Renou J.-P."/>
            <person name="Szurek B."/>
            <person name="Taconnat L."/>
            <person name="Small I."/>
        </authorList>
    </citation>
    <scope>GENE FAMILY</scope>
</reference>
<sequence>MRCTSFSSFSLSLEDALHLLQRFLYSSNQIKQIHTVLLTSNALVASRWKTKCVYNTLIRSYLTTGEYKTSLALFTHMLASHVQPNNLTFPSLIKAACSSFSVSYGVALHGQALKRGFLWDPFVQTSFVRFYGEVGDLESSRKMFDDILNPCVVACNSLLDACGRNGEMDYAFEYFQRMPVTDVVSWTTVINGFSKKGLHAKALMVFGEMIQNERAVITPNEATFVSVLSSCANFDQGGIRLGKQIHGYVMSKEIILTTTLGTALLDMYGKAGDLEMALTIFDQIRDKKVCAWNAIISALASNGRPKQALEMFEMMKSSYVHPNGITLLAILTACARSKLVDLGIQLFSSICSEYKIIPTSEHYGCVVDLIGRAGLLVDAANFIQSLPFEPDASVLGALLGACKIHENTELGNTVGKQLIGLQPQHCGQYVALSTFNALDSNWSEAEKMRKAMIEAGIRKIPAYSVLT</sequence>
<comment type="similarity">
    <text evidence="1">Belongs to the PPR family. PCMP-E subfamily.</text>
</comment>
<comment type="online information" name="Pentatricopeptide repeat proteins">
    <link uri="https://ppr.plantenergy.uwa.edu.au"/>
</comment>
<organism>
    <name type="scientific">Arabidopsis thaliana</name>
    <name type="common">Mouse-ear cress</name>
    <dbReference type="NCBI Taxonomy" id="3702"/>
    <lineage>
        <taxon>Eukaryota</taxon>
        <taxon>Viridiplantae</taxon>
        <taxon>Streptophyta</taxon>
        <taxon>Embryophyta</taxon>
        <taxon>Tracheophyta</taxon>
        <taxon>Spermatophyta</taxon>
        <taxon>Magnoliopsida</taxon>
        <taxon>eudicotyledons</taxon>
        <taxon>Gunneridae</taxon>
        <taxon>Pentapetalae</taxon>
        <taxon>rosids</taxon>
        <taxon>malvids</taxon>
        <taxon>Brassicales</taxon>
        <taxon>Brassicaceae</taxon>
        <taxon>Camelineae</taxon>
        <taxon>Arabidopsis</taxon>
    </lineage>
</organism>
<proteinExistence type="inferred from homology"/>
<evidence type="ECO:0000305" key="1"/>
<protein>
    <recommendedName>
        <fullName>Putative pentatricopeptide repeat-containing protein At1g10330</fullName>
    </recommendedName>
</protein>
<gene>
    <name type="primary">PCMP-E71</name>
    <name type="ordered locus">At1g10330</name>
    <name type="ORF">F14N23.21</name>
</gene>
<dbReference type="EMBL" id="AC005489">
    <property type="protein sequence ID" value="AAD32883.1"/>
    <property type="molecule type" value="Genomic_DNA"/>
</dbReference>
<dbReference type="EMBL" id="CP002684">
    <property type="protein sequence ID" value="AEE28566.1"/>
    <property type="molecule type" value="Genomic_DNA"/>
</dbReference>
<dbReference type="PIR" id="D86237">
    <property type="entry name" value="D86237"/>
</dbReference>
<dbReference type="RefSeq" id="NP_172504.1">
    <property type="nucleotide sequence ID" value="NM_100907.2"/>
</dbReference>
<dbReference type="SMR" id="Q9SY75"/>
<dbReference type="FunCoup" id="Q9SY75">
    <property type="interactions" value="455"/>
</dbReference>
<dbReference type="PaxDb" id="3702-AT1G10330.1"/>
<dbReference type="EnsemblPlants" id="AT1G10330.1">
    <property type="protein sequence ID" value="AT1G10330.1"/>
    <property type="gene ID" value="AT1G10330"/>
</dbReference>
<dbReference type="GeneID" id="837572"/>
<dbReference type="Gramene" id="AT1G10330.1">
    <property type="protein sequence ID" value="AT1G10330.1"/>
    <property type="gene ID" value="AT1G10330"/>
</dbReference>
<dbReference type="KEGG" id="ath:AT1G10330"/>
<dbReference type="Araport" id="AT1G10330"/>
<dbReference type="TAIR" id="AT1G10330"/>
<dbReference type="eggNOG" id="KOG4197">
    <property type="taxonomic scope" value="Eukaryota"/>
</dbReference>
<dbReference type="HOGENOM" id="CLU_002706_0_6_1"/>
<dbReference type="InParanoid" id="Q9SY75"/>
<dbReference type="OMA" id="QHCGQYV"/>
<dbReference type="PhylomeDB" id="Q9SY75"/>
<dbReference type="PRO" id="PR:Q9SY75"/>
<dbReference type="Proteomes" id="UP000006548">
    <property type="component" value="Chromosome 1"/>
</dbReference>
<dbReference type="ExpressionAtlas" id="Q9SY75">
    <property type="expression patterns" value="baseline and differential"/>
</dbReference>
<dbReference type="GO" id="GO:0003723">
    <property type="term" value="F:RNA binding"/>
    <property type="evidence" value="ECO:0007669"/>
    <property type="project" value="InterPro"/>
</dbReference>
<dbReference type="GO" id="GO:0009451">
    <property type="term" value="P:RNA modification"/>
    <property type="evidence" value="ECO:0007669"/>
    <property type="project" value="InterPro"/>
</dbReference>
<dbReference type="FunFam" id="1.25.40.10:FF:000887">
    <property type="entry name" value="Pentatricopeptide repeat-containing protein"/>
    <property type="match status" value="1"/>
</dbReference>
<dbReference type="FunFam" id="1.25.40.10:FF:000090">
    <property type="entry name" value="Pentatricopeptide repeat-containing protein, chloroplastic"/>
    <property type="match status" value="1"/>
</dbReference>
<dbReference type="Gene3D" id="1.25.40.10">
    <property type="entry name" value="Tetratricopeptide repeat domain"/>
    <property type="match status" value="3"/>
</dbReference>
<dbReference type="InterPro" id="IPR046848">
    <property type="entry name" value="E_motif"/>
</dbReference>
<dbReference type="InterPro" id="IPR002885">
    <property type="entry name" value="Pentatricopeptide_rpt"/>
</dbReference>
<dbReference type="InterPro" id="IPR046960">
    <property type="entry name" value="PPR_At4g14850-like_plant"/>
</dbReference>
<dbReference type="InterPro" id="IPR011990">
    <property type="entry name" value="TPR-like_helical_dom_sf"/>
</dbReference>
<dbReference type="NCBIfam" id="TIGR00756">
    <property type="entry name" value="PPR"/>
    <property type="match status" value="5"/>
</dbReference>
<dbReference type="PANTHER" id="PTHR47926">
    <property type="entry name" value="PENTATRICOPEPTIDE REPEAT-CONTAINING PROTEIN"/>
    <property type="match status" value="1"/>
</dbReference>
<dbReference type="PANTHER" id="PTHR47926:SF348">
    <property type="entry name" value="PENTATRICOPEPTIDE REPEAT-CONTAINING PROTEIN"/>
    <property type="match status" value="1"/>
</dbReference>
<dbReference type="Pfam" id="PF20431">
    <property type="entry name" value="E_motif"/>
    <property type="match status" value="1"/>
</dbReference>
<dbReference type="Pfam" id="PF01535">
    <property type="entry name" value="PPR"/>
    <property type="match status" value="1"/>
</dbReference>
<dbReference type="Pfam" id="PF13041">
    <property type="entry name" value="PPR_2"/>
    <property type="match status" value="3"/>
</dbReference>
<dbReference type="PROSITE" id="PS51375">
    <property type="entry name" value="PPR"/>
    <property type="match status" value="8"/>
</dbReference>